<gene>
    <name evidence="1" type="primary">nifH</name>
    <name type="ordered locus">Cag_1244</name>
</gene>
<accession>Q3AR70</accession>
<proteinExistence type="inferred from homology"/>
<protein>
    <recommendedName>
        <fullName evidence="1">Nitrogenase iron protein</fullName>
        <ecNumber evidence="1">1.18.6.1</ecNumber>
    </recommendedName>
    <alternativeName>
        <fullName evidence="1">Nitrogenase Fe protein</fullName>
    </alternativeName>
    <alternativeName>
        <fullName evidence="1">Nitrogenase component II</fullName>
    </alternativeName>
    <alternativeName>
        <fullName evidence="1">Nitrogenase reductase</fullName>
    </alternativeName>
</protein>
<comment type="function">
    <text evidence="1">The key enzymatic reactions in nitrogen fixation are catalyzed by the nitrogenase complex, which has 2 components: the iron protein and the molybdenum-iron protein.</text>
</comment>
<comment type="catalytic activity">
    <reaction evidence="1">
        <text>N2 + 8 reduced [2Fe-2S]-[ferredoxin] + 16 ATP + 16 H2O = H2 + 8 oxidized [2Fe-2S]-[ferredoxin] + 2 NH4(+) + 16 ADP + 16 phosphate + 6 H(+)</text>
        <dbReference type="Rhea" id="RHEA:21448"/>
        <dbReference type="Rhea" id="RHEA-COMP:10000"/>
        <dbReference type="Rhea" id="RHEA-COMP:10001"/>
        <dbReference type="ChEBI" id="CHEBI:15377"/>
        <dbReference type="ChEBI" id="CHEBI:15378"/>
        <dbReference type="ChEBI" id="CHEBI:17997"/>
        <dbReference type="ChEBI" id="CHEBI:18276"/>
        <dbReference type="ChEBI" id="CHEBI:28938"/>
        <dbReference type="ChEBI" id="CHEBI:30616"/>
        <dbReference type="ChEBI" id="CHEBI:33737"/>
        <dbReference type="ChEBI" id="CHEBI:33738"/>
        <dbReference type="ChEBI" id="CHEBI:43474"/>
        <dbReference type="ChEBI" id="CHEBI:456216"/>
        <dbReference type="EC" id="1.18.6.1"/>
    </reaction>
</comment>
<comment type="cofactor">
    <cofactor evidence="1">
        <name>[4Fe-4S] cluster</name>
        <dbReference type="ChEBI" id="CHEBI:49883"/>
    </cofactor>
    <text evidence="1">Binds 1 [4Fe-4S] cluster per dimer.</text>
</comment>
<comment type="subunit">
    <text evidence="1">Homodimer.</text>
</comment>
<comment type="PTM">
    <text evidence="1">The reversible ADP-ribosylation of Arg-97 inactivates the nitrogenase reductase and regulates nitrogenase activity.</text>
</comment>
<comment type="similarity">
    <text evidence="1">Belongs to the NifH/BchL/ChlL family.</text>
</comment>
<evidence type="ECO:0000255" key="1">
    <source>
        <dbReference type="HAMAP-Rule" id="MF_00533"/>
    </source>
</evidence>
<reference key="1">
    <citation type="submission" date="2005-08" db="EMBL/GenBank/DDBJ databases">
        <title>Complete sequence of Chlorobium chlorochromatii CaD3.</title>
        <authorList>
            <consortium name="US DOE Joint Genome Institute"/>
            <person name="Copeland A."/>
            <person name="Lucas S."/>
            <person name="Lapidus A."/>
            <person name="Barry K."/>
            <person name="Detter J.C."/>
            <person name="Glavina T."/>
            <person name="Hammon N."/>
            <person name="Israni S."/>
            <person name="Pitluck S."/>
            <person name="Bryant D."/>
            <person name="Schmutz J."/>
            <person name="Larimer F."/>
            <person name="Land M."/>
            <person name="Kyrpides N."/>
            <person name="Ivanova N."/>
            <person name="Richardson P."/>
        </authorList>
    </citation>
    <scope>NUCLEOTIDE SEQUENCE [LARGE SCALE GENOMIC DNA]</scope>
    <source>
        <strain>CaD3</strain>
    </source>
</reference>
<keyword id="KW-0004">4Fe-4S</keyword>
<keyword id="KW-0013">ADP-ribosylation</keyword>
<keyword id="KW-0067">ATP-binding</keyword>
<keyword id="KW-0408">Iron</keyword>
<keyword id="KW-0411">Iron-sulfur</keyword>
<keyword id="KW-0479">Metal-binding</keyword>
<keyword id="KW-0535">Nitrogen fixation</keyword>
<keyword id="KW-0547">Nucleotide-binding</keyword>
<keyword id="KW-0560">Oxidoreductase</keyword>
<sequence length="274" mass="30179">MRKVAIYGKGGIGKSTTTQNTVAGLAEMGKKVMVIGCDPKADSTRLLLGGLQQKTVLDTLREEGEEVELEDIIKEGYRNTRCTESGGPEPGVGCAGRGIITSVNLLEQLGAFDDEWNLDYVFYDVLGDVVCGGFAMPIRDGKAEEIYIVCSGEMMAMYAANNICKGILKYADAGGVRLGGLICNSRKVDNEREMIEELARRIGTQMIHFVPRDNFVQRAEINRKTVIDYDPTHGQADEYRALAQKINDNKMFVIPKPLEIEELESLLIEFGIAN</sequence>
<feature type="chain" id="PRO_1000211854" description="Nitrogenase iron protein">
    <location>
        <begin position="1"/>
        <end position="274"/>
    </location>
</feature>
<feature type="binding site" evidence="1">
    <location>
        <begin position="8"/>
        <end position="15"/>
    </location>
    <ligand>
        <name>ATP</name>
        <dbReference type="ChEBI" id="CHEBI:30616"/>
    </ligand>
</feature>
<feature type="binding site" evidence="1">
    <location>
        <position position="94"/>
    </location>
    <ligand>
        <name>[4Fe-4S] cluster</name>
        <dbReference type="ChEBI" id="CHEBI:49883"/>
        <note>ligand shared between dimeric partners</note>
    </ligand>
</feature>
<feature type="binding site" evidence="1">
    <location>
        <position position="131"/>
    </location>
    <ligand>
        <name>[4Fe-4S] cluster</name>
        <dbReference type="ChEBI" id="CHEBI:49883"/>
        <note>ligand shared between dimeric partners</note>
    </ligand>
</feature>
<feature type="modified residue" description="ADP-ribosylarginine; by dinitrogenase reductase ADP-ribosyltransferase" evidence="1">
    <location>
        <position position="97"/>
    </location>
</feature>
<organism>
    <name type="scientific">Chlorobium chlorochromatii (strain CaD3)</name>
    <dbReference type="NCBI Taxonomy" id="340177"/>
    <lineage>
        <taxon>Bacteria</taxon>
        <taxon>Pseudomonadati</taxon>
        <taxon>Chlorobiota</taxon>
        <taxon>Chlorobiia</taxon>
        <taxon>Chlorobiales</taxon>
        <taxon>Chlorobiaceae</taxon>
        <taxon>Chlorobium/Pelodictyon group</taxon>
        <taxon>Chlorobium</taxon>
    </lineage>
</organism>
<name>NIFH_CHLCH</name>
<dbReference type="EC" id="1.18.6.1" evidence="1"/>
<dbReference type="EMBL" id="CP000108">
    <property type="protein sequence ID" value="ABB28505.1"/>
    <property type="molecule type" value="Genomic_DNA"/>
</dbReference>
<dbReference type="SMR" id="Q3AR70"/>
<dbReference type="STRING" id="340177.Cag_1244"/>
<dbReference type="KEGG" id="cch:Cag_1244"/>
<dbReference type="eggNOG" id="COG1348">
    <property type="taxonomic scope" value="Bacteria"/>
</dbReference>
<dbReference type="HOGENOM" id="CLU_059373_0_0_10"/>
<dbReference type="OrthoDB" id="9778641at2"/>
<dbReference type="GO" id="GO:0051539">
    <property type="term" value="F:4 iron, 4 sulfur cluster binding"/>
    <property type="evidence" value="ECO:0007669"/>
    <property type="project" value="UniProtKB-KW"/>
</dbReference>
<dbReference type="GO" id="GO:0005524">
    <property type="term" value="F:ATP binding"/>
    <property type="evidence" value="ECO:0007669"/>
    <property type="project" value="UniProtKB-UniRule"/>
</dbReference>
<dbReference type="GO" id="GO:0046872">
    <property type="term" value="F:metal ion binding"/>
    <property type="evidence" value="ECO:0007669"/>
    <property type="project" value="UniProtKB-KW"/>
</dbReference>
<dbReference type="GO" id="GO:0016163">
    <property type="term" value="F:nitrogenase activity"/>
    <property type="evidence" value="ECO:0007669"/>
    <property type="project" value="UniProtKB-UniRule"/>
</dbReference>
<dbReference type="GO" id="GO:0009399">
    <property type="term" value="P:nitrogen fixation"/>
    <property type="evidence" value="ECO:0007669"/>
    <property type="project" value="UniProtKB-UniRule"/>
</dbReference>
<dbReference type="CDD" id="cd02040">
    <property type="entry name" value="NifH"/>
    <property type="match status" value="1"/>
</dbReference>
<dbReference type="Gene3D" id="3.40.50.300">
    <property type="entry name" value="P-loop containing nucleotide triphosphate hydrolases"/>
    <property type="match status" value="1"/>
</dbReference>
<dbReference type="HAMAP" id="MF_00533">
    <property type="entry name" value="NifH"/>
    <property type="match status" value="1"/>
</dbReference>
<dbReference type="InterPro" id="IPR030655">
    <property type="entry name" value="NifH/chlL_CS"/>
</dbReference>
<dbReference type="InterPro" id="IPR000392">
    <property type="entry name" value="NifH/frxC"/>
</dbReference>
<dbReference type="InterPro" id="IPR005977">
    <property type="entry name" value="Nitrogenase_Fe_NifH"/>
</dbReference>
<dbReference type="InterPro" id="IPR027417">
    <property type="entry name" value="P-loop_NTPase"/>
</dbReference>
<dbReference type="NCBIfam" id="TIGR01287">
    <property type="entry name" value="nifH"/>
    <property type="match status" value="1"/>
</dbReference>
<dbReference type="PANTHER" id="PTHR42864">
    <property type="entry name" value="LIGHT-INDEPENDENT PROTOCHLOROPHYLLIDE REDUCTASE IRON-SULFUR ATP-BINDING PROTEIN"/>
    <property type="match status" value="1"/>
</dbReference>
<dbReference type="PANTHER" id="PTHR42864:SF2">
    <property type="entry name" value="LIGHT-INDEPENDENT PROTOCHLOROPHYLLIDE REDUCTASE IRON-SULFUR ATP-BINDING PROTEIN"/>
    <property type="match status" value="1"/>
</dbReference>
<dbReference type="Pfam" id="PF00142">
    <property type="entry name" value="Fer4_NifH"/>
    <property type="match status" value="1"/>
</dbReference>
<dbReference type="PIRSF" id="PIRSF000363">
    <property type="entry name" value="Nitrogenase_iron"/>
    <property type="match status" value="1"/>
</dbReference>
<dbReference type="PRINTS" id="PR00091">
    <property type="entry name" value="NITROGNASEII"/>
</dbReference>
<dbReference type="SUPFAM" id="SSF52540">
    <property type="entry name" value="P-loop containing nucleoside triphosphate hydrolases"/>
    <property type="match status" value="1"/>
</dbReference>
<dbReference type="PROSITE" id="PS00746">
    <property type="entry name" value="NIFH_FRXC_1"/>
    <property type="match status" value="1"/>
</dbReference>
<dbReference type="PROSITE" id="PS00692">
    <property type="entry name" value="NIFH_FRXC_2"/>
    <property type="match status" value="1"/>
</dbReference>
<dbReference type="PROSITE" id="PS51026">
    <property type="entry name" value="NIFH_FRXC_3"/>
    <property type="match status" value="1"/>
</dbReference>